<keyword id="KW-0472">Membrane</keyword>
<keyword id="KW-0496">Mitochondrion</keyword>
<keyword id="KW-0999">Mitochondrion inner membrane</keyword>
<keyword id="KW-1185">Reference proteome</keyword>
<keyword id="KW-1278">Translocase</keyword>
<keyword id="KW-0812">Transmembrane</keyword>
<keyword id="KW-1133">Transmembrane helix</keyword>
<proteinExistence type="inferred from homology"/>
<sequence>MAHQSHAYHMVKPSPWPLTGALSALLTTSGLTMWFHFHSTTLLLTGLLTNALTMYQWWRDVVRESTYQGHHTLPVQKGLRYGMILFITSEVFFFAGFFWAFYHSSLAPTPQLGGHWPPTGIIPLNPLEVPLLNTSVLLASGVSITWAHHSLMENNRTQMIQALLITILLGIYFTLLQASEYIEAPFTISDGIYGSTFFMATGFHGLHVIIGSTFLTVCLARQLLFHFTSKHHFGFEAAAWYWHFVDVVWLFLYVSIYWWGS</sequence>
<geneLocation type="mitochondrion"/>
<name>COX3_PONAB</name>
<evidence type="ECO:0000250" key="1">
    <source>
        <dbReference type="UniProtKB" id="P00415"/>
    </source>
</evidence>
<evidence type="ECO:0000250" key="2">
    <source>
        <dbReference type="UniProtKB" id="P00420"/>
    </source>
</evidence>
<evidence type="ECO:0000305" key="3"/>
<comment type="function">
    <text evidence="2">Component of the cytochrome c oxidase, the last enzyme in the mitochondrial electron transport chain which drives oxidative phosphorylation. The respiratory chain contains 3 multisubunit complexes succinate dehydrogenase (complex II, CII), ubiquinol-cytochrome c oxidoreductase (cytochrome b-c1 complex, complex III, CIII) and cytochrome c oxidase (complex IV, CIV), that cooperate to transfer electrons derived from NADH and succinate to molecular oxygen, creating an electrochemical gradient over the inner membrane that drives transmembrane transport and the ATP synthase. Cytochrome c oxidase is the component of the respiratory chain that catalyzes the reduction of oxygen to water. Electrons originating from reduced cytochrome c in the intermembrane space (IMS) are transferred via the dinuclear copper A center (CU(A)) of subunit 2 and heme A of subunit 1 to the active site in subunit 1, a binuclear center (BNC) formed by heme A3 and copper B (CU(B)). The BNC reduces molecular oxygen to 2 water molecules using 4 electrons from cytochrome c in the IMS and 4 protons from the mitochondrial matrix.</text>
</comment>
<comment type="catalytic activity">
    <reaction evidence="2">
        <text>4 Fe(II)-[cytochrome c] + O2 + 8 H(+)(in) = 4 Fe(III)-[cytochrome c] + 2 H2O + 4 H(+)(out)</text>
        <dbReference type="Rhea" id="RHEA:11436"/>
        <dbReference type="Rhea" id="RHEA-COMP:10350"/>
        <dbReference type="Rhea" id="RHEA-COMP:14399"/>
        <dbReference type="ChEBI" id="CHEBI:15377"/>
        <dbReference type="ChEBI" id="CHEBI:15378"/>
        <dbReference type="ChEBI" id="CHEBI:15379"/>
        <dbReference type="ChEBI" id="CHEBI:29033"/>
        <dbReference type="ChEBI" id="CHEBI:29034"/>
        <dbReference type="EC" id="7.1.1.9"/>
    </reaction>
    <physiologicalReaction direction="left-to-right" evidence="2">
        <dbReference type="Rhea" id="RHEA:11437"/>
    </physiologicalReaction>
</comment>
<comment type="subunit">
    <text evidence="1">Component of the cytochrome c oxidase (complex IV, CIV), a multisubunit enzyme composed of 14 subunits. The complex is composed of a catalytic core of 3 subunits MT-CO1, MT-CO2 and MT-CO3, encoded in the mitochondrial DNA, and 11 supernumerary subunits COX4I, COX5A, COX5B, COX6A, COX6B, COX6C, COX7A, COX7B, COX7C, COX8 and NDUFA4, which are encoded in the nuclear genome. The complex exists as a monomer or a dimer and forms supercomplexes (SCs) in the inner mitochondrial membrane with NADH-ubiquinone oxidoreductase (complex I, CI) and ubiquinol-cytochrome c oxidoreductase (cytochrome b-c1 complex, complex III, CIII), resulting in different assemblies (supercomplex SCI(1)III(2)IV(1) and megacomplex MCI(2)III(2)IV(2)).</text>
</comment>
<comment type="subcellular location">
    <subcellularLocation>
        <location evidence="1">Mitochondrion inner membrane</location>
        <topology evidence="1">Multi-pass membrane protein</topology>
    </subcellularLocation>
</comment>
<comment type="similarity">
    <text evidence="3">Belongs to the cytochrome c oxidase subunit 3 family.</text>
</comment>
<reference key="1">
    <citation type="journal article" date="1996" name="J. Mol. Evol.">
        <title>The mitochondrial DNA molecule of Sumatran orangutan and a molecular proposal for two (Bornean and Sumatran) species of orangutan.</title>
        <authorList>
            <person name="Xu X."/>
            <person name="Arnason U."/>
        </authorList>
    </citation>
    <scope>NUCLEOTIDE SEQUENCE [LARGE SCALE GENOMIC DNA]</scope>
</reference>
<gene>
    <name type="primary">MT-CO3</name>
    <name type="synonym">COIII</name>
    <name type="synonym">COXIII</name>
    <name type="synonym">MTCO3</name>
</gene>
<feature type="chain" id="PRO_0000183837" description="Cytochrome c oxidase subunit 3">
    <location>
        <begin position="1"/>
        <end position="261"/>
    </location>
</feature>
<feature type="topological domain" description="Mitochondrial matrix" evidence="1">
    <location>
        <begin position="1"/>
        <end position="15"/>
    </location>
</feature>
<feature type="transmembrane region" description="Helical; Name=I" evidence="1">
    <location>
        <begin position="16"/>
        <end position="34"/>
    </location>
</feature>
<feature type="topological domain" description="Mitochondrial intermembrane" evidence="1">
    <location>
        <begin position="35"/>
        <end position="40"/>
    </location>
</feature>
<feature type="transmembrane region" description="Helical; Name=II" evidence="1">
    <location>
        <begin position="41"/>
        <end position="66"/>
    </location>
</feature>
<feature type="topological domain" description="Mitochondrial matrix" evidence="1">
    <location>
        <begin position="67"/>
        <end position="72"/>
    </location>
</feature>
<feature type="transmembrane region" description="Helical; Name=III" evidence="1">
    <location>
        <begin position="73"/>
        <end position="105"/>
    </location>
</feature>
<feature type="topological domain" description="Mitochondrial intermembrane" evidence="1">
    <location>
        <begin position="106"/>
        <end position="128"/>
    </location>
</feature>
<feature type="transmembrane region" description="Helical; Name=IV" evidence="1">
    <location>
        <begin position="129"/>
        <end position="152"/>
    </location>
</feature>
<feature type="topological domain" description="Mitochondrial matrix" evidence="1">
    <location>
        <begin position="153"/>
        <end position="155"/>
    </location>
</feature>
<feature type="transmembrane region" description="Helical; Name=V" evidence="1">
    <location>
        <begin position="156"/>
        <end position="183"/>
    </location>
</feature>
<feature type="topological domain" description="Mitochondrial intermembrane" evidence="1">
    <location>
        <begin position="184"/>
        <end position="190"/>
    </location>
</feature>
<feature type="transmembrane region" description="Helical; Name=VI" evidence="1">
    <location>
        <begin position="191"/>
        <end position="223"/>
    </location>
</feature>
<feature type="topological domain" description="Mitochondrial matrix" evidence="1">
    <location>
        <begin position="224"/>
        <end position="232"/>
    </location>
</feature>
<feature type="transmembrane region" description="Helical; Name=VII" evidence="1">
    <location>
        <begin position="233"/>
        <end position="256"/>
    </location>
</feature>
<feature type="topological domain" description="Mitochondrial intermembrane" evidence="1">
    <location>
        <begin position="257"/>
        <end position="261"/>
    </location>
</feature>
<accession>P92696</accession>
<dbReference type="EC" id="7.1.1.9"/>
<dbReference type="EMBL" id="X97707">
    <property type="protein sequence ID" value="CAA66289.1"/>
    <property type="molecule type" value="Genomic_DNA"/>
</dbReference>
<dbReference type="RefSeq" id="NP_007841.1">
    <property type="nucleotide sequence ID" value="NC_002083.1"/>
</dbReference>
<dbReference type="SMR" id="P92696"/>
<dbReference type="FunCoup" id="P92696">
    <property type="interactions" value="221"/>
</dbReference>
<dbReference type="STRING" id="9601.ENSPPYP00000023445"/>
<dbReference type="Ensembl" id="ENSPPYT00000024441.1">
    <property type="protein sequence ID" value="ENSPPYP00000023445.1"/>
    <property type="gene ID" value="ENSPPYG00000020962.1"/>
</dbReference>
<dbReference type="GeneID" id="808480"/>
<dbReference type="KEGG" id="pon:808480"/>
<dbReference type="CTD" id="4514"/>
<dbReference type="eggNOG" id="KOG4664">
    <property type="taxonomic scope" value="Eukaryota"/>
</dbReference>
<dbReference type="GeneTree" id="ENSGT00390000013064"/>
<dbReference type="HOGENOM" id="CLU_044071_0_0_1"/>
<dbReference type="InParanoid" id="P92696"/>
<dbReference type="OMA" id="SIYWWGS"/>
<dbReference type="TreeFam" id="TF343435"/>
<dbReference type="Proteomes" id="UP000001595">
    <property type="component" value="Mitochondrion"/>
</dbReference>
<dbReference type="GO" id="GO:0005743">
    <property type="term" value="C:mitochondrial inner membrane"/>
    <property type="evidence" value="ECO:0007669"/>
    <property type="project" value="UniProtKB-SubCell"/>
</dbReference>
<dbReference type="GO" id="GO:0045277">
    <property type="term" value="C:respiratory chain complex IV"/>
    <property type="evidence" value="ECO:0000250"/>
    <property type="project" value="UniProtKB"/>
</dbReference>
<dbReference type="GO" id="GO:0004129">
    <property type="term" value="F:cytochrome-c oxidase activity"/>
    <property type="evidence" value="ECO:0007669"/>
    <property type="project" value="UniProtKB-EC"/>
</dbReference>
<dbReference type="GO" id="GO:0006123">
    <property type="term" value="P:mitochondrial electron transport, cytochrome c to oxygen"/>
    <property type="evidence" value="ECO:0007669"/>
    <property type="project" value="TreeGrafter"/>
</dbReference>
<dbReference type="GO" id="GO:0008535">
    <property type="term" value="P:respiratory chain complex IV assembly"/>
    <property type="evidence" value="ECO:0000250"/>
    <property type="project" value="UniProtKB"/>
</dbReference>
<dbReference type="CDD" id="cd01665">
    <property type="entry name" value="Cyt_c_Oxidase_III"/>
    <property type="match status" value="1"/>
</dbReference>
<dbReference type="FunFam" id="1.10.287.70:FF:000048">
    <property type="entry name" value="Cytochrome c oxidase subunit 3"/>
    <property type="match status" value="1"/>
</dbReference>
<dbReference type="FunFam" id="1.20.120.80:FF:000002">
    <property type="entry name" value="Cytochrome c oxidase subunit 3"/>
    <property type="match status" value="1"/>
</dbReference>
<dbReference type="Gene3D" id="1.10.287.70">
    <property type="match status" value="1"/>
</dbReference>
<dbReference type="Gene3D" id="1.20.120.80">
    <property type="entry name" value="Cytochrome c oxidase, subunit III, four-helix bundle"/>
    <property type="match status" value="1"/>
</dbReference>
<dbReference type="InterPro" id="IPR024791">
    <property type="entry name" value="Cyt_c/ubiquinol_Oxase_su3"/>
</dbReference>
<dbReference type="InterPro" id="IPR033945">
    <property type="entry name" value="Cyt_c_oxase_su3_dom"/>
</dbReference>
<dbReference type="InterPro" id="IPR000298">
    <property type="entry name" value="Cyt_c_oxidase-like_su3"/>
</dbReference>
<dbReference type="InterPro" id="IPR035973">
    <property type="entry name" value="Cyt_c_oxidase_su3-like_sf"/>
</dbReference>
<dbReference type="InterPro" id="IPR013833">
    <property type="entry name" value="Cyt_c_oxidase_su3_a-hlx"/>
</dbReference>
<dbReference type="PANTHER" id="PTHR11403:SF7">
    <property type="entry name" value="CYTOCHROME C OXIDASE SUBUNIT 3"/>
    <property type="match status" value="1"/>
</dbReference>
<dbReference type="PANTHER" id="PTHR11403">
    <property type="entry name" value="CYTOCHROME C OXIDASE SUBUNIT III"/>
    <property type="match status" value="1"/>
</dbReference>
<dbReference type="Pfam" id="PF00510">
    <property type="entry name" value="COX3"/>
    <property type="match status" value="1"/>
</dbReference>
<dbReference type="SUPFAM" id="SSF81452">
    <property type="entry name" value="Cytochrome c oxidase subunit III-like"/>
    <property type="match status" value="1"/>
</dbReference>
<dbReference type="PROSITE" id="PS50253">
    <property type="entry name" value="COX3"/>
    <property type="match status" value="1"/>
</dbReference>
<organism>
    <name type="scientific">Pongo abelii</name>
    <name type="common">Sumatran orangutan</name>
    <name type="synonym">Pongo pygmaeus abelii</name>
    <dbReference type="NCBI Taxonomy" id="9601"/>
    <lineage>
        <taxon>Eukaryota</taxon>
        <taxon>Metazoa</taxon>
        <taxon>Chordata</taxon>
        <taxon>Craniata</taxon>
        <taxon>Vertebrata</taxon>
        <taxon>Euteleostomi</taxon>
        <taxon>Mammalia</taxon>
        <taxon>Eutheria</taxon>
        <taxon>Euarchontoglires</taxon>
        <taxon>Primates</taxon>
        <taxon>Haplorrhini</taxon>
        <taxon>Catarrhini</taxon>
        <taxon>Hominidae</taxon>
        <taxon>Pongo</taxon>
    </lineage>
</organism>
<protein>
    <recommendedName>
        <fullName>Cytochrome c oxidase subunit 3</fullName>
        <ecNumber>7.1.1.9</ecNumber>
    </recommendedName>
    <alternativeName>
        <fullName>Cytochrome c oxidase polypeptide III</fullName>
    </alternativeName>
</protein>